<feature type="chain" id="PRO_0000201450" description="Hydrogenase maturation factor HypD2">
    <location>
        <begin position="1"/>
        <end position="380"/>
    </location>
</feature>
<feature type="binding site" evidence="1">
    <location>
        <position position="36"/>
    </location>
    <ligand>
        <name>Fe cation</name>
        <dbReference type="ChEBI" id="CHEBI:24875"/>
    </ligand>
</feature>
<feature type="binding site" evidence="1">
    <location>
        <position position="64"/>
    </location>
    <ligand>
        <name>Fe cation</name>
        <dbReference type="ChEBI" id="CHEBI:24875"/>
    </ligand>
</feature>
<feature type="binding site" evidence="1">
    <location>
        <position position="67"/>
    </location>
    <ligand>
        <name>Fe cation</name>
        <dbReference type="ChEBI" id="CHEBI:24875"/>
    </ligand>
</feature>
<feature type="sequence conflict" description="In Ref. 2; CAA78988." evidence="2" ref="2">
    <original>K</original>
    <variation>A</variation>
    <location>
        <position position="54"/>
    </location>
</feature>
<feature type="sequence conflict" description="In Ref. 2; CAA78988." evidence="2" ref="2">
    <original>E</original>
    <variation>M</variation>
    <location>
        <position position="82"/>
    </location>
</feature>
<feature type="sequence conflict" description="In Ref. 2; CAA78988." evidence="2" ref="2">
    <original>S</original>
    <variation>T</variation>
    <location>
        <position position="261"/>
    </location>
</feature>
<protein>
    <recommendedName>
        <fullName evidence="1">Hydrogenase maturation factor HypD2</fullName>
    </recommendedName>
</protein>
<comment type="function">
    <text evidence="1">Involved in the maturation of [NiFe] hydrogenases. Involved in the biosynthesis of the Fe(CN)(2)CO cofactor.</text>
</comment>
<comment type="cofactor">
    <cofactor evidence="1">
        <name>[4Fe-4S] cluster</name>
        <dbReference type="ChEBI" id="CHEBI:49883"/>
    </cofactor>
</comment>
<comment type="pathway">
    <text evidence="1">Protein modification; [NiFe] hydrogenase maturation.</text>
</comment>
<comment type="similarity">
    <text evidence="2">Belongs to the HypD family.</text>
</comment>
<reference key="1">
    <citation type="journal article" date="2002" name="DNA Res.">
        <title>Complete genomic sequence of nitrogen-fixing symbiotic bacterium Bradyrhizobium japonicum USDA110.</title>
        <authorList>
            <person name="Kaneko T."/>
            <person name="Nakamura Y."/>
            <person name="Sato S."/>
            <person name="Minamisawa K."/>
            <person name="Uchiumi T."/>
            <person name="Sasamoto S."/>
            <person name="Watanabe A."/>
            <person name="Idesawa K."/>
            <person name="Iriguchi M."/>
            <person name="Kawashima K."/>
            <person name="Kohara M."/>
            <person name="Matsumoto M."/>
            <person name="Shimpo S."/>
            <person name="Tsuruoka H."/>
            <person name="Wada T."/>
            <person name="Yamada M."/>
            <person name="Tabata S."/>
        </authorList>
    </citation>
    <scope>NUCLEOTIDE SEQUENCE [LARGE SCALE GENOMIC DNA]</scope>
    <source>
        <strain>JCM 10833 / BCRC 13528 / IAM 13628 / NBRC 14792 / USDA 110</strain>
    </source>
</reference>
<reference key="2">
    <citation type="journal article" date="1993" name="Mol. Gen. Genet.">
        <title>Identification of a potential transcriptional regulator of hydrogenase activity in free-living Bradyrhizobium japonicum strains.</title>
        <authorList>
            <person name="van Soom C."/>
            <person name="Verreth C."/>
            <person name="Sampaio M.J."/>
            <person name="Vanderleyden J."/>
        </authorList>
    </citation>
    <scope>NUCLEOTIDE SEQUENCE [GENOMIC DNA] OF 34-380</scope>
    <source>
        <strain>CB1809</strain>
    </source>
</reference>
<name>HYPD2_BRADU</name>
<accession>P31904</accession>
<proteinExistence type="inferred from homology"/>
<dbReference type="EMBL" id="BA000040">
    <property type="protein sequence ID" value="BAC52193.1"/>
    <property type="molecule type" value="Genomic_DNA"/>
</dbReference>
<dbReference type="EMBL" id="Z17373">
    <property type="protein sequence ID" value="CAA78988.1"/>
    <property type="molecule type" value="Genomic_DNA"/>
</dbReference>
<dbReference type="PIR" id="S35229">
    <property type="entry name" value="S35229"/>
</dbReference>
<dbReference type="RefSeq" id="NP_773568.1">
    <property type="nucleotide sequence ID" value="NC_004463.1"/>
</dbReference>
<dbReference type="RefSeq" id="WP_011089666.1">
    <property type="nucleotide sequence ID" value="NC_004463.1"/>
</dbReference>
<dbReference type="SMR" id="P31904"/>
<dbReference type="FunCoup" id="P31904">
    <property type="interactions" value="50"/>
</dbReference>
<dbReference type="STRING" id="224911.AAV28_32230"/>
<dbReference type="EnsemblBacteria" id="BAC52193">
    <property type="protein sequence ID" value="BAC52193"/>
    <property type="gene ID" value="BAC52193"/>
</dbReference>
<dbReference type="GeneID" id="46493894"/>
<dbReference type="KEGG" id="bja:bll6928"/>
<dbReference type="PATRIC" id="fig|224911.44.peg.6962"/>
<dbReference type="eggNOG" id="COG0409">
    <property type="taxonomic scope" value="Bacteria"/>
</dbReference>
<dbReference type="HOGENOM" id="CLU_048562_1_0_5"/>
<dbReference type="InParanoid" id="P31904"/>
<dbReference type="OrthoDB" id="9770424at2"/>
<dbReference type="PhylomeDB" id="P31904"/>
<dbReference type="UniPathway" id="UPA00335"/>
<dbReference type="Proteomes" id="UP000002526">
    <property type="component" value="Chromosome"/>
</dbReference>
<dbReference type="GO" id="GO:0051539">
    <property type="term" value="F:4 iron, 4 sulfur cluster binding"/>
    <property type="evidence" value="ECO:0000318"/>
    <property type="project" value="GO_Central"/>
</dbReference>
<dbReference type="GO" id="GO:0070025">
    <property type="term" value="F:carbon monoxide binding"/>
    <property type="evidence" value="ECO:0000318"/>
    <property type="project" value="GO_Central"/>
</dbReference>
<dbReference type="GO" id="GO:0005506">
    <property type="term" value="F:iron ion binding"/>
    <property type="evidence" value="ECO:0000318"/>
    <property type="project" value="GO_Central"/>
</dbReference>
<dbReference type="GO" id="GO:0051604">
    <property type="term" value="P:protein maturation"/>
    <property type="evidence" value="ECO:0000318"/>
    <property type="project" value="GO_Central"/>
</dbReference>
<dbReference type="Gene3D" id="6.10.20.100">
    <property type="match status" value="1"/>
</dbReference>
<dbReference type="Gene3D" id="3.40.50.11750">
    <property type="entry name" value="HypD, alpha/beta domain 1"/>
    <property type="match status" value="2"/>
</dbReference>
<dbReference type="InterPro" id="IPR002780">
    <property type="entry name" value="Hyd_form_HypD"/>
</dbReference>
<dbReference type="InterPro" id="IPR042243">
    <property type="entry name" value="HypD_1"/>
</dbReference>
<dbReference type="InterPro" id="IPR042244">
    <property type="entry name" value="HypD_2_sf"/>
</dbReference>
<dbReference type="NCBIfam" id="TIGR00075">
    <property type="entry name" value="hypD"/>
    <property type="match status" value="1"/>
</dbReference>
<dbReference type="PANTHER" id="PTHR30149:SF0">
    <property type="entry name" value="HYDROGENASE MATURATION FACTOR HYPD"/>
    <property type="match status" value="1"/>
</dbReference>
<dbReference type="PANTHER" id="PTHR30149">
    <property type="entry name" value="HYDROGENASE PROTEIN ASSEMBLY PROTEIN HYPD"/>
    <property type="match status" value="1"/>
</dbReference>
<dbReference type="Pfam" id="PF01924">
    <property type="entry name" value="HypD"/>
    <property type="match status" value="1"/>
</dbReference>
<dbReference type="PIRSF" id="PIRSF005622">
    <property type="entry name" value="Hydrgn_mat_hypD"/>
    <property type="match status" value="1"/>
</dbReference>
<gene>
    <name type="primary">hypD2</name>
    <name type="synonym">hypD</name>
    <name type="synonym">hypD'</name>
    <name type="ordered locus">bll6928</name>
</gene>
<sequence>MKYADEFRDKEIALGLAKAIRAEADPRKPYRFMEFCGGHTHAISRYGLEDMLPKNVRMIHGPGCPVCVLPAGRIDMAIRLAERPDIILCVYGDLMRVPGSQGASLLKAKARGADIRMVYSTIDAIRIAEDNPGREVVFFAIGFETTTPPTAVMIRLAGKKQLENFSVFCNHVLTPPAMQNILESPDIRNIGRVEIDGFVGPAHVSTIIGTAPYEFFAEEFGKPVVIAGFEPLDMMQAILMLVRQVNEHRHEVENQYSRAVSRDGNLRAKEEVSDIFELRDQFEWRGLGQVPYSGLKLKRAYAKYDAEVRFDMNELRVDDNPACECGAILRGVKKPVDCKLFGTVCTPETPMGSCMVSSEGACAAHWTYGRFRDHQQRRAS</sequence>
<evidence type="ECO:0000250" key="1">
    <source>
        <dbReference type="UniProtKB" id="P24192"/>
    </source>
</evidence>
<evidence type="ECO:0000305" key="2"/>
<keyword id="KW-0004">4Fe-4S</keyword>
<keyword id="KW-0408">Iron</keyword>
<keyword id="KW-0411">Iron-sulfur</keyword>
<keyword id="KW-0479">Metal-binding</keyword>
<keyword id="KW-1185">Reference proteome</keyword>
<organism>
    <name type="scientific">Bradyrhizobium diazoefficiens (strain JCM 10833 / BCRC 13528 / IAM 13628 / NBRC 14792 / USDA 110)</name>
    <dbReference type="NCBI Taxonomy" id="224911"/>
    <lineage>
        <taxon>Bacteria</taxon>
        <taxon>Pseudomonadati</taxon>
        <taxon>Pseudomonadota</taxon>
        <taxon>Alphaproteobacteria</taxon>
        <taxon>Hyphomicrobiales</taxon>
        <taxon>Nitrobacteraceae</taxon>
        <taxon>Bradyrhizobium</taxon>
    </lineage>
</organism>